<dbReference type="EMBL" id="AL163002">
    <property type="protein sequence ID" value="CAB86070.1"/>
    <property type="molecule type" value="Genomic_DNA"/>
</dbReference>
<dbReference type="EMBL" id="CP002688">
    <property type="protein sequence ID" value="AED90547.1"/>
    <property type="molecule type" value="Genomic_DNA"/>
</dbReference>
<dbReference type="EMBL" id="AY085893">
    <property type="protein sequence ID" value="AAM63105.1"/>
    <property type="molecule type" value="mRNA"/>
</dbReference>
<dbReference type="EMBL" id="BT025587">
    <property type="protein sequence ID" value="ABF59005.1"/>
    <property type="molecule type" value="mRNA"/>
</dbReference>
<dbReference type="PIR" id="T48324">
    <property type="entry name" value="T48324"/>
</dbReference>
<dbReference type="RefSeq" id="NP_195923.1">
    <property type="nucleotide sequence ID" value="NM_120381.3"/>
</dbReference>
<dbReference type="SMR" id="Q9LYY2"/>
<dbReference type="FunCoup" id="Q9LYY2">
    <property type="interactions" value="2686"/>
</dbReference>
<dbReference type="STRING" id="3702.Q9LYY2"/>
<dbReference type="iPTMnet" id="Q9LYY2"/>
<dbReference type="PaxDb" id="3702-AT5G03030.1"/>
<dbReference type="ProteomicsDB" id="234329"/>
<dbReference type="EnsemblPlants" id="AT5G03030.1">
    <property type="protein sequence ID" value="AT5G03030.1"/>
    <property type="gene ID" value="AT5G03030"/>
</dbReference>
<dbReference type="GeneID" id="831703"/>
<dbReference type="Gramene" id="AT5G03030.1">
    <property type="protein sequence ID" value="AT5G03030.1"/>
    <property type="gene ID" value="AT5G03030"/>
</dbReference>
<dbReference type="KEGG" id="ath:AT5G03030"/>
<dbReference type="Araport" id="AT5G03030"/>
<dbReference type="TAIR" id="AT5G03030"/>
<dbReference type="eggNOG" id="KOG0723">
    <property type="taxonomic scope" value="Eukaryota"/>
</dbReference>
<dbReference type="HOGENOM" id="CLU_017633_13_2_1"/>
<dbReference type="InParanoid" id="Q9LYY2"/>
<dbReference type="OMA" id="CCEPATP"/>
<dbReference type="OrthoDB" id="240298at2759"/>
<dbReference type="PhylomeDB" id="Q9LYY2"/>
<dbReference type="PRO" id="PR:Q9LYY2"/>
<dbReference type="Proteomes" id="UP000006548">
    <property type="component" value="Chromosome 5"/>
</dbReference>
<dbReference type="ExpressionAtlas" id="Q9LYY2">
    <property type="expression patterns" value="baseline and differential"/>
</dbReference>
<dbReference type="GO" id="GO:0005743">
    <property type="term" value="C:mitochondrial inner membrane"/>
    <property type="evidence" value="ECO:0007669"/>
    <property type="project" value="UniProtKB-SubCell"/>
</dbReference>
<dbReference type="FunFam" id="1.10.287.110:FF:000001">
    <property type="entry name" value="Import inner membrane translocase subunit tim14"/>
    <property type="match status" value="1"/>
</dbReference>
<dbReference type="Gene3D" id="1.10.287.110">
    <property type="entry name" value="DnaJ domain"/>
    <property type="match status" value="1"/>
</dbReference>
<dbReference type="InterPro" id="IPR036869">
    <property type="entry name" value="J_dom_sf"/>
</dbReference>
<dbReference type="PANTHER" id="PTHR12763">
    <property type="match status" value="1"/>
</dbReference>
<dbReference type="PANTHER" id="PTHR12763:SF51">
    <property type="entry name" value="MITOCHONDRIAL IMPORT INNER MEMBRANE TRANSLOCASE SUBUNIT TIM14-3"/>
    <property type="match status" value="1"/>
</dbReference>
<dbReference type="SUPFAM" id="SSF46565">
    <property type="entry name" value="Chaperone J-domain"/>
    <property type="match status" value="1"/>
</dbReference>
<organism>
    <name type="scientific">Arabidopsis thaliana</name>
    <name type="common">Mouse-ear cress</name>
    <dbReference type="NCBI Taxonomy" id="3702"/>
    <lineage>
        <taxon>Eukaryota</taxon>
        <taxon>Viridiplantae</taxon>
        <taxon>Streptophyta</taxon>
        <taxon>Embryophyta</taxon>
        <taxon>Tracheophyta</taxon>
        <taxon>Spermatophyta</taxon>
        <taxon>Magnoliopsida</taxon>
        <taxon>eudicotyledons</taxon>
        <taxon>Gunneridae</taxon>
        <taxon>Pentapetalae</taxon>
        <taxon>rosids</taxon>
        <taxon>malvids</taxon>
        <taxon>Brassicales</taxon>
        <taxon>Brassicaceae</taxon>
        <taxon>Camelineae</taxon>
        <taxon>Arabidopsis</taxon>
    </lineage>
</organism>
<comment type="function">
    <text evidence="1">Component of the PAM complex, a complex required for the translocation of transit peptide-containing proteins from the inner membrane into the mitochondrial matrix in an ATP-dependent manner.</text>
</comment>
<comment type="subunit">
    <text evidence="1">Probable component of the PAM complex at least composed of a mitochondrial HSP70 protein, TIMM44 and TIMM14. The complex interacts with the TIMM23 component of the TIM17:23 complex (By similarity).</text>
</comment>
<comment type="subcellular location">
    <subcellularLocation>
        <location evidence="3">Mitochondrion</location>
    </subcellularLocation>
    <subcellularLocation>
        <location evidence="1">Mitochondrion inner membrane</location>
        <topology evidence="4">Single-pass membrane protein</topology>
    </subcellularLocation>
</comment>
<comment type="similarity">
    <text evidence="4">Belongs to the TIM14 family.</text>
</comment>
<accession>Q9LYY2</accession>
<evidence type="ECO:0000250" key="1"/>
<evidence type="ECO:0000255" key="2"/>
<evidence type="ECO:0000269" key="3">
    <source>
    </source>
</evidence>
<evidence type="ECO:0000305" key="4"/>
<evidence type="ECO:0007744" key="5">
    <source>
    </source>
</evidence>
<protein>
    <recommendedName>
        <fullName>Mitochondrial import inner membrane translocase subunit TIM14-3</fullName>
    </recommendedName>
    <alternativeName>
        <fullName>Chaperone DnaJ-domain containing protein 3</fullName>
    </alternativeName>
</protein>
<proteinExistence type="evidence at protein level"/>
<feature type="initiator methionine" description="Removed" evidence="5">
    <location>
        <position position="1"/>
    </location>
</feature>
<feature type="chain" id="PRO_0000420927" description="Mitochondrial import inner membrane translocase subunit TIM14-3">
    <location>
        <begin position="2"/>
        <end position="112"/>
    </location>
</feature>
<feature type="transmembrane region" description="Helical" evidence="2">
    <location>
        <begin position="6"/>
        <end position="28"/>
    </location>
</feature>
<feature type="domain" description="J">
    <location>
        <begin position="53"/>
        <end position="112"/>
    </location>
</feature>
<feature type="modified residue" description="N-acetylalanine" evidence="5">
    <location>
        <position position="2"/>
    </location>
</feature>
<sequence length="112" mass="12064">MATPMIAGAAVAAAAVAGRYGILAWQAFKARPRVPRMRRFYEGGFQSSMTRREAALILGVRESVVADKVKEAHRRVMVANHPDAGGSHYLASKINEAKDMMLGKSNNSGSAF</sequence>
<reference key="1">
    <citation type="journal article" date="2000" name="Nature">
        <title>Sequence and analysis of chromosome 5 of the plant Arabidopsis thaliana.</title>
        <authorList>
            <person name="Tabata S."/>
            <person name="Kaneko T."/>
            <person name="Nakamura Y."/>
            <person name="Kotani H."/>
            <person name="Kato T."/>
            <person name="Asamizu E."/>
            <person name="Miyajima N."/>
            <person name="Sasamoto S."/>
            <person name="Kimura T."/>
            <person name="Hosouchi T."/>
            <person name="Kawashima K."/>
            <person name="Kohara M."/>
            <person name="Matsumoto M."/>
            <person name="Matsuno A."/>
            <person name="Muraki A."/>
            <person name="Nakayama S."/>
            <person name="Nakazaki N."/>
            <person name="Naruo K."/>
            <person name="Okumura S."/>
            <person name="Shinpo S."/>
            <person name="Takeuchi C."/>
            <person name="Wada T."/>
            <person name="Watanabe A."/>
            <person name="Yamada M."/>
            <person name="Yasuda M."/>
            <person name="Sato S."/>
            <person name="de la Bastide M."/>
            <person name="Huang E."/>
            <person name="Spiegel L."/>
            <person name="Gnoj L."/>
            <person name="O'Shaughnessy A."/>
            <person name="Preston R."/>
            <person name="Habermann K."/>
            <person name="Murray J."/>
            <person name="Johnson D."/>
            <person name="Rohlfing T."/>
            <person name="Nelson J."/>
            <person name="Stoneking T."/>
            <person name="Pepin K."/>
            <person name="Spieth J."/>
            <person name="Sekhon M."/>
            <person name="Armstrong J."/>
            <person name="Becker M."/>
            <person name="Belter E."/>
            <person name="Cordum H."/>
            <person name="Cordes M."/>
            <person name="Courtney L."/>
            <person name="Courtney W."/>
            <person name="Dante M."/>
            <person name="Du H."/>
            <person name="Edwards J."/>
            <person name="Fryman J."/>
            <person name="Haakensen B."/>
            <person name="Lamar E."/>
            <person name="Latreille P."/>
            <person name="Leonard S."/>
            <person name="Meyer R."/>
            <person name="Mulvaney E."/>
            <person name="Ozersky P."/>
            <person name="Riley A."/>
            <person name="Strowmatt C."/>
            <person name="Wagner-McPherson C."/>
            <person name="Wollam A."/>
            <person name="Yoakum M."/>
            <person name="Bell M."/>
            <person name="Dedhia N."/>
            <person name="Parnell L."/>
            <person name="Shah R."/>
            <person name="Rodriguez M."/>
            <person name="Hoon See L."/>
            <person name="Vil D."/>
            <person name="Baker J."/>
            <person name="Kirchoff K."/>
            <person name="Toth K."/>
            <person name="King L."/>
            <person name="Bahret A."/>
            <person name="Miller B."/>
            <person name="Marra M.A."/>
            <person name="Martienssen R."/>
            <person name="McCombie W.R."/>
            <person name="Wilson R.K."/>
            <person name="Murphy G."/>
            <person name="Bancroft I."/>
            <person name="Volckaert G."/>
            <person name="Wambutt R."/>
            <person name="Duesterhoeft A."/>
            <person name="Stiekema W."/>
            <person name="Pohl T."/>
            <person name="Entian K.-D."/>
            <person name="Terryn N."/>
            <person name="Hartley N."/>
            <person name="Bent E."/>
            <person name="Johnson S."/>
            <person name="Langham S.-A."/>
            <person name="McCullagh B."/>
            <person name="Robben J."/>
            <person name="Grymonprez B."/>
            <person name="Zimmermann W."/>
            <person name="Ramsperger U."/>
            <person name="Wedler H."/>
            <person name="Balke K."/>
            <person name="Wedler E."/>
            <person name="Peters S."/>
            <person name="van Staveren M."/>
            <person name="Dirkse W."/>
            <person name="Mooijman P."/>
            <person name="Klein Lankhorst R."/>
            <person name="Weitzenegger T."/>
            <person name="Bothe G."/>
            <person name="Rose M."/>
            <person name="Hauf J."/>
            <person name="Berneiser S."/>
            <person name="Hempel S."/>
            <person name="Feldpausch M."/>
            <person name="Lamberth S."/>
            <person name="Villarroel R."/>
            <person name="Gielen J."/>
            <person name="Ardiles W."/>
            <person name="Bents O."/>
            <person name="Lemcke K."/>
            <person name="Kolesov G."/>
            <person name="Mayer K.F.X."/>
            <person name="Rudd S."/>
            <person name="Schoof H."/>
            <person name="Schueller C."/>
            <person name="Zaccaria P."/>
            <person name="Mewes H.-W."/>
            <person name="Bevan M."/>
            <person name="Fransz P.F."/>
        </authorList>
    </citation>
    <scope>NUCLEOTIDE SEQUENCE [LARGE SCALE GENOMIC DNA]</scope>
    <source>
        <strain>cv. Columbia</strain>
    </source>
</reference>
<reference key="2">
    <citation type="journal article" date="2017" name="Plant J.">
        <title>Araport11: a complete reannotation of the Arabidopsis thaliana reference genome.</title>
        <authorList>
            <person name="Cheng C.Y."/>
            <person name="Krishnakumar V."/>
            <person name="Chan A.P."/>
            <person name="Thibaud-Nissen F."/>
            <person name="Schobel S."/>
            <person name="Town C.D."/>
        </authorList>
    </citation>
    <scope>GENOME REANNOTATION</scope>
    <source>
        <strain>cv. Columbia</strain>
    </source>
</reference>
<reference key="3">
    <citation type="submission" date="2006-05" db="EMBL/GenBank/DDBJ databases">
        <title>Arabidopsis ORF clones.</title>
        <authorList>
            <person name="Quinitio C."/>
            <person name="Chen H."/>
            <person name="Kim C.J."/>
            <person name="Shinn P."/>
            <person name="Ecker J.R."/>
        </authorList>
    </citation>
    <scope>NUCLEOTIDE SEQUENCE [LARGE SCALE MRNA]</scope>
</reference>
<reference key="4">
    <citation type="submission" date="2002-03" db="EMBL/GenBank/DDBJ databases">
        <title>Full-length cDNA from Arabidopsis thaliana.</title>
        <authorList>
            <person name="Brover V.V."/>
            <person name="Troukhan M.E."/>
            <person name="Alexandrov N.A."/>
            <person name="Lu Y.-P."/>
            <person name="Flavell R.B."/>
            <person name="Feldmann K.A."/>
        </authorList>
    </citation>
    <scope>NUCLEOTIDE SEQUENCE [LARGE SCALE MRNA]</scope>
</reference>
<reference key="5">
    <citation type="journal article" date="2007" name="Plant Physiol.">
        <title>Characterization of the preprotein and amino acid transporter gene family in Arabidopsis.</title>
        <authorList>
            <person name="Murcha M.W."/>
            <person name="Elhafez D."/>
            <person name="Lister R."/>
            <person name="Tonti-Filippini J."/>
            <person name="Baumgartner M."/>
            <person name="Philippar K."/>
            <person name="Carrie C."/>
            <person name="Mokranjac D."/>
            <person name="Soll J."/>
            <person name="Whelan J."/>
        </authorList>
    </citation>
    <scope>SUBCELLULAR LOCATION</scope>
</reference>
<reference key="6">
    <citation type="journal article" date="2012" name="Mol. Cell. Proteomics">
        <title>Comparative large-scale characterisation of plant vs. mammal proteins reveals similar and idiosyncratic N-alpha acetylation features.</title>
        <authorList>
            <person name="Bienvenut W.V."/>
            <person name="Sumpton D."/>
            <person name="Martinez A."/>
            <person name="Lilla S."/>
            <person name="Espagne C."/>
            <person name="Meinnel T."/>
            <person name="Giglione C."/>
        </authorList>
    </citation>
    <scope>ACETYLATION [LARGE SCALE ANALYSIS] AT ALA-2</scope>
    <scope>CLEAVAGE OF INITIATOR METHIONINE [LARGE SCALE ANALYSIS]</scope>
    <scope>IDENTIFICATION BY MASS SPECTROMETRY [LARGE SCALE ANALYSIS]</scope>
</reference>
<gene>
    <name type="primary">TIM14-3</name>
    <name type="ordered locus">At5g03030</name>
    <name type="ORF">F15A17.60</name>
</gene>
<keyword id="KW-0007">Acetylation</keyword>
<keyword id="KW-0472">Membrane</keyword>
<keyword id="KW-0496">Mitochondrion</keyword>
<keyword id="KW-0999">Mitochondrion inner membrane</keyword>
<keyword id="KW-1185">Reference proteome</keyword>
<keyword id="KW-0812">Transmembrane</keyword>
<keyword id="KW-1133">Transmembrane helix</keyword>
<name>TI143_ARATH</name>